<keyword id="KW-1003">Cell membrane</keyword>
<keyword id="KW-0472">Membrane</keyword>
<keyword id="KW-1185">Reference proteome</keyword>
<keyword id="KW-0812">Transmembrane</keyword>
<keyword id="KW-1133">Transmembrane helix</keyword>
<keyword id="KW-0813">Transport</keyword>
<proteinExistence type="inferred from homology"/>
<feature type="chain" id="PRO_0000349883" description="Uncharacterized MFS-type transporter YitZ">
    <location>
        <begin position="1"/>
        <end position="164"/>
    </location>
</feature>
<feature type="transmembrane region" description="Helical" evidence="1">
    <location>
        <begin position="25"/>
        <end position="45"/>
    </location>
</feature>
<feature type="transmembrane region" description="Helical" evidence="1">
    <location>
        <begin position="63"/>
        <end position="83"/>
    </location>
</feature>
<feature type="transmembrane region" description="Helical" evidence="1">
    <location>
        <begin position="120"/>
        <end position="140"/>
    </location>
</feature>
<feature type="transmembrane region" description="Helical" evidence="1">
    <location>
        <begin position="141"/>
        <end position="161"/>
    </location>
</feature>
<gene>
    <name type="primary">yitZ</name>
    <name type="ordered locus">BSU11180</name>
</gene>
<sequence length="164" mass="18353">MFFASSLIFPFYILFVKNIGSSYTQFGFSYGLFGLSGALIYPLLGRLSERFDSRYFLLLNSWGMAVLLLYVPHIGSVVQVYIVQVLLGLFGAMQKHGEKVLIANFTDSGERGKKIGNYHFWTAVFSAAAIMLGGFLADFFTVQMIFYASSILYFLSGLMMMKTG</sequence>
<reference key="1">
    <citation type="journal article" date="1997" name="Microbiology">
        <title>A 10.3 kbp segment from nprB to argJ at the 102 degrees region of the Bacillus subtilis chromosome.</title>
        <authorList>
            <person name="Levine A."/>
            <person name="Vannier F."/>
            <person name="Roche B."/>
            <person name="Autret S."/>
            <person name="Mavel D."/>
            <person name="Seror S.J."/>
        </authorList>
    </citation>
    <scope>NUCLEOTIDE SEQUENCE [GENOMIC DNA]</scope>
    <source>
        <strain>168</strain>
    </source>
</reference>
<reference key="2">
    <citation type="journal article" date="1997" name="Microbiology">
        <title>Sequencing of regions downstream of addA (98 degrees) and citG (289 degrees) in Bacillus subtilis.</title>
        <authorList>
            <person name="Medina N."/>
            <person name="Vannier F."/>
            <person name="Roche B."/>
            <person name="Autret S."/>
            <person name="Levine A."/>
            <person name="Seror S.J."/>
        </authorList>
    </citation>
    <scope>NUCLEOTIDE SEQUENCE [GENOMIC DNA]</scope>
    <source>
        <strain>168</strain>
    </source>
</reference>
<reference key="3">
    <citation type="journal article" date="1997" name="Nature">
        <title>The complete genome sequence of the Gram-positive bacterium Bacillus subtilis.</title>
        <authorList>
            <person name="Kunst F."/>
            <person name="Ogasawara N."/>
            <person name="Moszer I."/>
            <person name="Albertini A.M."/>
            <person name="Alloni G."/>
            <person name="Azevedo V."/>
            <person name="Bertero M.G."/>
            <person name="Bessieres P."/>
            <person name="Bolotin A."/>
            <person name="Borchert S."/>
            <person name="Borriss R."/>
            <person name="Boursier L."/>
            <person name="Brans A."/>
            <person name="Braun M."/>
            <person name="Brignell S.C."/>
            <person name="Bron S."/>
            <person name="Brouillet S."/>
            <person name="Bruschi C.V."/>
            <person name="Caldwell B."/>
            <person name="Capuano V."/>
            <person name="Carter N.M."/>
            <person name="Choi S.-K."/>
            <person name="Codani J.-J."/>
            <person name="Connerton I.F."/>
            <person name="Cummings N.J."/>
            <person name="Daniel R.A."/>
            <person name="Denizot F."/>
            <person name="Devine K.M."/>
            <person name="Duesterhoeft A."/>
            <person name="Ehrlich S.D."/>
            <person name="Emmerson P.T."/>
            <person name="Entian K.-D."/>
            <person name="Errington J."/>
            <person name="Fabret C."/>
            <person name="Ferrari E."/>
            <person name="Foulger D."/>
            <person name="Fritz C."/>
            <person name="Fujita M."/>
            <person name="Fujita Y."/>
            <person name="Fuma S."/>
            <person name="Galizzi A."/>
            <person name="Galleron N."/>
            <person name="Ghim S.-Y."/>
            <person name="Glaser P."/>
            <person name="Goffeau A."/>
            <person name="Golightly E.J."/>
            <person name="Grandi G."/>
            <person name="Guiseppi G."/>
            <person name="Guy B.J."/>
            <person name="Haga K."/>
            <person name="Haiech J."/>
            <person name="Harwood C.R."/>
            <person name="Henaut A."/>
            <person name="Hilbert H."/>
            <person name="Holsappel S."/>
            <person name="Hosono S."/>
            <person name="Hullo M.-F."/>
            <person name="Itaya M."/>
            <person name="Jones L.-M."/>
            <person name="Joris B."/>
            <person name="Karamata D."/>
            <person name="Kasahara Y."/>
            <person name="Klaerr-Blanchard M."/>
            <person name="Klein C."/>
            <person name="Kobayashi Y."/>
            <person name="Koetter P."/>
            <person name="Koningstein G."/>
            <person name="Krogh S."/>
            <person name="Kumano M."/>
            <person name="Kurita K."/>
            <person name="Lapidus A."/>
            <person name="Lardinois S."/>
            <person name="Lauber J."/>
            <person name="Lazarevic V."/>
            <person name="Lee S.-M."/>
            <person name="Levine A."/>
            <person name="Liu H."/>
            <person name="Masuda S."/>
            <person name="Mauel C."/>
            <person name="Medigue C."/>
            <person name="Medina N."/>
            <person name="Mellado R.P."/>
            <person name="Mizuno M."/>
            <person name="Moestl D."/>
            <person name="Nakai S."/>
            <person name="Noback M."/>
            <person name="Noone D."/>
            <person name="O'Reilly M."/>
            <person name="Ogawa K."/>
            <person name="Ogiwara A."/>
            <person name="Oudega B."/>
            <person name="Park S.-H."/>
            <person name="Parro V."/>
            <person name="Pohl T.M."/>
            <person name="Portetelle D."/>
            <person name="Porwollik S."/>
            <person name="Prescott A.M."/>
            <person name="Presecan E."/>
            <person name="Pujic P."/>
            <person name="Purnelle B."/>
            <person name="Rapoport G."/>
            <person name="Rey M."/>
            <person name="Reynolds S."/>
            <person name="Rieger M."/>
            <person name="Rivolta C."/>
            <person name="Rocha E."/>
            <person name="Roche B."/>
            <person name="Rose M."/>
            <person name="Sadaie Y."/>
            <person name="Sato T."/>
            <person name="Scanlan E."/>
            <person name="Schleich S."/>
            <person name="Schroeter R."/>
            <person name="Scoffone F."/>
            <person name="Sekiguchi J."/>
            <person name="Sekowska A."/>
            <person name="Seror S.J."/>
            <person name="Serror P."/>
            <person name="Shin B.-S."/>
            <person name="Soldo B."/>
            <person name="Sorokin A."/>
            <person name="Tacconi E."/>
            <person name="Takagi T."/>
            <person name="Takahashi H."/>
            <person name="Takemaru K."/>
            <person name="Takeuchi M."/>
            <person name="Tamakoshi A."/>
            <person name="Tanaka T."/>
            <person name="Terpstra P."/>
            <person name="Tognoni A."/>
            <person name="Tosato V."/>
            <person name="Uchiyama S."/>
            <person name="Vandenbol M."/>
            <person name="Vannier F."/>
            <person name="Vassarotti A."/>
            <person name="Viari A."/>
            <person name="Wambutt R."/>
            <person name="Wedler E."/>
            <person name="Wedler H."/>
            <person name="Weitzenegger T."/>
            <person name="Winters P."/>
            <person name="Wipat A."/>
            <person name="Yamamoto H."/>
            <person name="Yamane K."/>
            <person name="Yasumoto K."/>
            <person name="Yata K."/>
            <person name="Yoshida K."/>
            <person name="Yoshikawa H.-F."/>
            <person name="Zumstein E."/>
            <person name="Yoshikawa H."/>
            <person name="Danchin A."/>
        </authorList>
    </citation>
    <scope>NUCLEOTIDE SEQUENCE [LARGE SCALE GENOMIC DNA]</scope>
    <source>
        <strain>168</strain>
    </source>
</reference>
<protein>
    <recommendedName>
        <fullName>Uncharacterized MFS-type transporter YitZ</fullName>
    </recommendedName>
</protein>
<comment type="subcellular location">
    <subcellularLocation>
        <location>Cell membrane</location>
        <topology>Multi-pass membrane protein</topology>
    </subcellularLocation>
</comment>
<comment type="similarity">
    <text evidence="2">Belongs to the major facilitator superfamily.</text>
</comment>
<name>YITZ_BACSU</name>
<organism>
    <name type="scientific">Bacillus subtilis (strain 168)</name>
    <dbReference type="NCBI Taxonomy" id="224308"/>
    <lineage>
        <taxon>Bacteria</taxon>
        <taxon>Bacillati</taxon>
        <taxon>Bacillota</taxon>
        <taxon>Bacilli</taxon>
        <taxon>Bacillales</taxon>
        <taxon>Bacillaceae</taxon>
        <taxon>Bacillus</taxon>
    </lineage>
</organism>
<evidence type="ECO:0000255" key="1"/>
<evidence type="ECO:0000305" key="2"/>
<dbReference type="EMBL" id="Z79580">
    <property type="protein sequence ID" value="CAB01841.1"/>
    <property type="molecule type" value="Genomic_DNA"/>
</dbReference>
<dbReference type="EMBL" id="Y09476">
    <property type="protein sequence ID" value="CAA70637.1"/>
    <property type="molecule type" value="Genomic_DNA"/>
</dbReference>
<dbReference type="EMBL" id="AL009126">
    <property type="protein sequence ID" value="CAB12959.1"/>
    <property type="molecule type" value="Genomic_DNA"/>
</dbReference>
<dbReference type="PIR" id="C69842">
    <property type="entry name" value="C69842"/>
</dbReference>
<dbReference type="RefSeq" id="NP_389000.1">
    <property type="nucleotide sequence ID" value="NC_000964.3"/>
</dbReference>
<dbReference type="RefSeq" id="WP_010886476.1">
    <property type="nucleotide sequence ID" value="NZ_OZ025638.1"/>
</dbReference>
<dbReference type="SMR" id="P70952"/>
<dbReference type="FunCoup" id="P70952">
    <property type="interactions" value="149"/>
</dbReference>
<dbReference type="STRING" id="224308.BSU11180"/>
<dbReference type="PaxDb" id="224308-BSU11180"/>
<dbReference type="EnsemblBacteria" id="CAB12959">
    <property type="protein sequence ID" value="CAB12959"/>
    <property type="gene ID" value="BSU_11180"/>
</dbReference>
<dbReference type="GeneID" id="939355"/>
<dbReference type="KEGG" id="bsu:BSU11180"/>
<dbReference type="PATRIC" id="fig|224308.43.peg.1167"/>
<dbReference type="eggNOG" id="COG2271">
    <property type="taxonomic scope" value="Bacteria"/>
</dbReference>
<dbReference type="InParanoid" id="P70952"/>
<dbReference type="OrthoDB" id="2640962at2"/>
<dbReference type="BioCyc" id="BSUB:BSU11180-MONOMER"/>
<dbReference type="Proteomes" id="UP000001570">
    <property type="component" value="Chromosome"/>
</dbReference>
<dbReference type="GO" id="GO:0005886">
    <property type="term" value="C:plasma membrane"/>
    <property type="evidence" value="ECO:0007669"/>
    <property type="project" value="UniProtKB-SubCell"/>
</dbReference>
<dbReference type="GO" id="GO:0022857">
    <property type="term" value="F:transmembrane transporter activity"/>
    <property type="evidence" value="ECO:0007669"/>
    <property type="project" value="InterPro"/>
</dbReference>
<dbReference type="Gene3D" id="1.20.1250.20">
    <property type="entry name" value="MFS general substrate transporter like domains"/>
    <property type="match status" value="1"/>
</dbReference>
<dbReference type="InterPro" id="IPR011701">
    <property type="entry name" value="MFS"/>
</dbReference>
<dbReference type="InterPro" id="IPR020846">
    <property type="entry name" value="MFS_dom"/>
</dbReference>
<dbReference type="InterPro" id="IPR050497">
    <property type="entry name" value="MFS_MdtG_subfamily"/>
</dbReference>
<dbReference type="InterPro" id="IPR036259">
    <property type="entry name" value="MFS_trans_sf"/>
</dbReference>
<dbReference type="PANTHER" id="PTHR43414">
    <property type="entry name" value="MULTIDRUG RESISTANCE PROTEIN MDTG"/>
    <property type="match status" value="1"/>
</dbReference>
<dbReference type="PANTHER" id="PTHR43414:SF6">
    <property type="entry name" value="MULTIDRUG RESISTANCE PROTEIN MDTG"/>
    <property type="match status" value="1"/>
</dbReference>
<dbReference type="Pfam" id="PF07690">
    <property type="entry name" value="MFS_1"/>
    <property type="match status" value="1"/>
</dbReference>
<dbReference type="SUPFAM" id="SSF103473">
    <property type="entry name" value="MFS general substrate transporter"/>
    <property type="match status" value="1"/>
</dbReference>
<dbReference type="PROSITE" id="PS50850">
    <property type="entry name" value="MFS"/>
    <property type="match status" value="1"/>
</dbReference>
<accession>P70952</accession>
<accession>O08145</accession>
<accession>Q796P4</accession>